<sequence length="475" mass="54764">MSSLLKTDFNVSKYRLIAQKREANAVEIEAALEVVREFIIKKKLILYGGIAIDYALHLKGSSIYPEGERPDFDMFSPNHVEDAYELADILYEKGFKQVGTVRAIHVQTMRVRTDFVWVADLSYMPPNIFNTIPTLTYKNLKIIHPDYQRAGLHLAFCFPFDNPPREDVFSRFKKDLQRYNLIEKYYPIPVVPVKSIYESKTFSIPFKQVAIHGFAAYALLYQTLNELRITCKVPEWKTEFPQPSYSYHKNDKNITLTVDMPKAYPALVLATYNPEEVIKEMGLHLTEICEPYMDYSPPIFKTNDIHFFSTMFKELAISIIQDNLIVVSPQYLLLYFLYGAFATPADKSLFLFYYNATLWILEKADSLLNIIQKQTSPEEFTRFANTSPFVLTTRVLSCSQERCTFSPAYRISLANDVQQSQLPLPKTHFLSNSLPDVSTLPYNYYPGKGKDRPTNFSYEKNLLFNIGGKCTPSAM</sequence>
<organismHost>
    <name type="scientific">Ornithodoros</name>
    <name type="common">relapsing fever ticks</name>
    <dbReference type="NCBI Taxonomy" id="6937"/>
</organismHost>
<organismHost>
    <name type="scientific">Sus scrofa</name>
    <name type="common">Pig</name>
    <dbReference type="NCBI Taxonomy" id="9823"/>
</organismHost>
<proteinExistence type="evidence at transcript level"/>
<keyword id="KW-0067">ATP-binding</keyword>
<keyword id="KW-0426">Late protein</keyword>
<keyword id="KW-0507">mRNA processing</keyword>
<keyword id="KW-0547">Nucleotide-binding</keyword>
<keyword id="KW-1185">Reference proteome</keyword>
<keyword id="KW-0804">Transcription</keyword>
<keyword id="KW-0808">Transferase</keyword>
<keyword id="KW-0946">Virion</keyword>
<gene>
    <name type="ordered locus">Ba71V-067</name>
    <name type="ORF">C475L</name>
</gene>
<dbReference type="EC" id="2.7.7.19"/>
<dbReference type="EMBL" id="U18466">
    <property type="protein sequence ID" value="AAA65297.1"/>
    <property type="molecule type" value="Genomic_DNA"/>
</dbReference>
<dbReference type="RefSeq" id="NP_042761.1">
    <property type="nucleotide sequence ID" value="NC_001659.2"/>
</dbReference>
<dbReference type="SMR" id="Q65159"/>
<dbReference type="GeneID" id="22220297"/>
<dbReference type="KEGG" id="vg:22220297"/>
<dbReference type="Proteomes" id="UP000000624">
    <property type="component" value="Segment"/>
</dbReference>
<dbReference type="GO" id="GO:0044423">
    <property type="term" value="C:virion component"/>
    <property type="evidence" value="ECO:0007669"/>
    <property type="project" value="UniProtKB-KW"/>
</dbReference>
<dbReference type="GO" id="GO:0005524">
    <property type="term" value="F:ATP binding"/>
    <property type="evidence" value="ECO:0007669"/>
    <property type="project" value="UniProtKB-KW"/>
</dbReference>
<dbReference type="GO" id="GO:1990817">
    <property type="term" value="F:poly(A) RNA polymerase activity"/>
    <property type="evidence" value="ECO:0007669"/>
    <property type="project" value="UniProtKB-EC"/>
</dbReference>
<dbReference type="GO" id="GO:0006397">
    <property type="term" value="P:mRNA processing"/>
    <property type="evidence" value="ECO:0007669"/>
    <property type="project" value="UniProtKB-KW"/>
</dbReference>
<dbReference type="CDD" id="cd20924">
    <property type="entry name" value="polyA_pol_Asfar"/>
    <property type="match status" value="1"/>
</dbReference>
<dbReference type="InterPro" id="IPR045355">
    <property type="entry name" value="PolyA_pol_cat_su"/>
</dbReference>
<dbReference type="Pfam" id="PF19244">
    <property type="entry name" value="Poly_A_pol_cat"/>
    <property type="match status" value="1"/>
</dbReference>
<evidence type="ECO:0000269" key="1">
    <source>
    </source>
</evidence>
<evidence type="ECO:0000269" key="2">
    <source>
    </source>
</evidence>
<evidence type="ECO:0000303" key="3">
    <source>
    </source>
</evidence>
<evidence type="ECO:0000305" key="4"/>
<reference key="1">
    <citation type="journal article" date="1995" name="Virology">
        <title>Analysis of the complete nucleotide sequence of African swine fever virus.</title>
        <authorList>
            <person name="Yanez R.J."/>
            <person name="Rodriguez J.M."/>
            <person name="Nogal M.L."/>
            <person name="Yuste L."/>
            <person name="Enriquez C."/>
            <person name="Rodriguez J.F."/>
            <person name="Vinuela E."/>
        </authorList>
    </citation>
    <scope>NUCLEOTIDE SEQUENCE [LARGE SCALE GENOMIC DNA]</scope>
</reference>
<reference key="2">
    <citation type="journal article" date="2013" name="Virus Res.">
        <title>African swine fever virus transcription.</title>
        <authorList>
            <person name="Rodriguez J.M."/>
            <person name="Salas M.L."/>
        </authorList>
    </citation>
    <scope>REVIEW</scope>
</reference>
<reference key="3">
    <citation type="journal article" date="2018" name="J. Virol.">
        <title>A Proteomic Atlas of the African Swine Fever Virus Particle.</title>
        <authorList>
            <person name="Alejo A."/>
            <person name="Matamoros T."/>
            <person name="Guerra M."/>
            <person name="Andres G."/>
        </authorList>
    </citation>
    <scope>SUBCELLULAR LOCATION</scope>
</reference>
<reference key="4">
    <citation type="journal article" date="2020" name="J. Virol.">
        <title>The African Swine Fever Virus Transcriptome.</title>
        <authorList>
            <person name="Cackett G."/>
            <person name="Matelska D."/>
            <person name="Sykora M."/>
            <person name="Portugal R."/>
            <person name="Malecki M."/>
            <person name="Baehler J."/>
            <person name="Dixon L."/>
            <person name="Werner F."/>
        </authorList>
    </citation>
    <scope>INDUCTION</scope>
</reference>
<name>PAP1_ASFB7</name>
<comment type="function">
    <text evidence="4">Polymerase that creates the 3'-poly(A) tail of mRNA's.</text>
</comment>
<comment type="catalytic activity">
    <reaction>
        <text>RNA(n) + ATP = RNA(n)-3'-adenine ribonucleotide + diphosphate</text>
        <dbReference type="Rhea" id="RHEA:11332"/>
        <dbReference type="Rhea" id="RHEA-COMP:14527"/>
        <dbReference type="Rhea" id="RHEA-COMP:17347"/>
        <dbReference type="ChEBI" id="CHEBI:30616"/>
        <dbReference type="ChEBI" id="CHEBI:33019"/>
        <dbReference type="ChEBI" id="CHEBI:140395"/>
        <dbReference type="ChEBI" id="CHEBI:173115"/>
        <dbReference type="EC" id="2.7.7.19"/>
    </reaction>
</comment>
<comment type="subcellular location">
    <subcellularLocation>
        <location evidence="1">Virion</location>
    </subcellularLocation>
</comment>
<comment type="induction">
    <text evidence="2">Expressed in the late phase of the viral replicative cycle.</text>
</comment>
<comment type="similarity">
    <text evidence="4">Belongs to the poxviridae poly(A) polymerase catalytic subunit family. Highly divergent.</text>
</comment>
<accession>Q65159</accession>
<organism>
    <name type="scientific">African swine fever virus (strain Badajoz 1971 Vero-adapted)</name>
    <name type="common">Ba71V</name>
    <name type="synonym">ASFV</name>
    <dbReference type="NCBI Taxonomy" id="10498"/>
    <lineage>
        <taxon>Viruses</taxon>
        <taxon>Varidnaviria</taxon>
        <taxon>Bamfordvirae</taxon>
        <taxon>Nucleocytoviricota</taxon>
        <taxon>Pokkesviricetes</taxon>
        <taxon>Asfuvirales</taxon>
        <taxon>Asfarviridae</taxon>
        <taxon>Asfivirus</taxon>
        <taxon>African swine fever virus</taxon>
    </lineage>
</organism>
<protein>
    <recommendedName>
        <fullName evidence="3">Putative poly(A) polymerase catalytic subunit</fullName>
        <ecNumber>2.7.7.19</ecNumber>
    </recommendedName>
</protein>
<feature type="chain" id="PRO_0000308944" description="Putative poly(A) polymerase catalytic subunit">
    <location>
        <begin position="1"/>
        <end position="475"/>
    </location>
</feature>